<proteinExistence type="inferred from homology"/>
<evidence type="ECO:0000250" key="1"/>
<evidence type="ECO:0000250" key="2">
    <source>
        <dbReference type="UniProtKB" id="Q8NK89"/>
    </source>
</evidence>
<evidence type="ECO:0000255" key="3"/>
<evidence type="ECO:0000305" key="4"/>
<organism>
    <name type="scientific">Aspergillus flavus (strain ATCC 200026 / FGSC A1120 / IAM 13836 / NRRL 3357 / JCM 12722 / SRRC 167)</name>
    <dbReference type="NCBI Taxonomy" id="332952"/>
    <lineage>
        <taxon>Eukaryota</taxon>
        <taxon>Fungi</taxon>
        <taxon>Dikarya</taxon>
        <taxon>Ascomycota</taxon>
        <taxon>Pezizomycotina</taxon>
        <taxon>Eurotiomycetes</taxon>
        <taxon>Eurotiomycetidae</taxon>
        <taxon>Eurotiales</taxon>
        <taxon>Aspergillaceae</taxon>
        <taxon>Aspergillus</taxon>
        <taxon>Aspergillus subgen. Circumdati</taxon>
    </lineage>
</organism>
<feature type="signal peptide" evidence="3">
    <location>
        <begin position="1"/>
        <end position="26"/>
    </location>
</feature>
<feature type="chain" id="PRO_0000394604" description="Probable alpha-L-arabinofuranosidase B">
    <location>
        <begin position="27"/>
        <end position="506"/>
    </location>
</feature>
<feature type="region of interest" description="Catalytic" evidence="1">
    <location>
        <begin position="27"/>
        <end position="343"/>
    </location>
</feature>
<feature type="region of interest" description="ABD" evidence="1">
    <location>
        <begin position="344"/>
        <end position="506"/>
    </location>
</feature>
<feature type="active site" description="Nucleophile" evidence="1">
    <location>
        <position position="229"/>
    </location>
</feature>
<feature type="active site" description="Proton donor" evidence="1">
    <location>
        <position position="305"/>
    </location>
</feature>
<feature type="binding site" evidence="2">
    <location>
        <position position="227"/>
    </location>
    <ligand>
        <name>substrate</name>
    </ligand>
</feature>
<feature type="binding site" evidence="2">
    <location>
        <position position="230"/>
    </location>
    <ligand>
        <name>substrate</name>
    </ligand>
</feature>
<feature type="binding site" evidence="2">
    <location>
        <position position="304"/>
    </location>
    <ligand>
        <name>substrate</name>
    </ligand>
</feature>
<feature type="binding site" evidence="2">
    <location>
        <position position="424"/>
    </location>
    <ligand>
        <name>substrate</name>
    </ligand>
</feature>
<feature type="binding site" evidence="2">
    <location>
        <position position="426"/>
    </location>
    <ligand>
        <name>substrate</name>
    </ligand>
</feature>
<feature type="binding site" evidence="2">
    <location>
        <position position="427"/>
    </location>
    <ligand>
        <name>substrate</name>
    </ligand>
</feature>
<feature type="binding site" evidence="2">
    <location>
        <position position="443"/>
    </location>
    <ligand>
        <name>substrate</name>
    </ligand>
</feature>
<feature type="binding site" evidence="2">
    <location>
        <position position="471"/>
    </location>
    <ligand>
        <name>substrate</name>
    </ligand>
</feature>
<feature type="binding site" evidence="2">
    <location>
        <position position="473"/>
    </location>
    <ligand>
        <name>substrate</name>
    </ligand>
</feature>
<feature type="binding site" evidence="2">
    <location>
        <position position="476"/>
    </location>
    <ligand>
        <name>substrate</name>
    </ligand>
</feature>
<feature type="binding site" evidence="2">
    <location>
        <position position="496"/>
    </location>
    <ligand>
        <name>substrate</name>
    </ligand>
</feature>
<feature type="site" description="Cis-peptide bond" evidence="2">
    <location>
        <begin position="184"/>
        <end position="185"/>
    </location>
</feature>
<feature type="glycosylation site" description="N-linked (GlcNAc...) asparagine" evidence="3">
    <location>
        <position position="91"/>
    </location>
</feature>
<feature type="disulfide bond" evidence="2">
    <location>
        <begin position="29"/>
        <end position="39"/>
    </location>
</feature>
<feature type="disulfide bond" evidence="2">
    <location>
        <begin position="89"/>
        <end position="94"/>
    </location>
</feature>
<feature type="disulfide bond" evidence="2">
    <location>
        <begin position="184"/>
        <end position="185"/>
    </location>
</feature>
<feature type="disulfide bond" evidence="2">
    <location>
        <begin position="409"/>
        <end position="447"/>
    </location>
</feature>
<name>ABFB_ASPFN</name>
<keyword id="KW-0119">Carbohydrate metabolism</keyword>
<keyword id="KW-1015">Disulfide bond</keyword>
<keyword id="KW-0325">Glycoprotein</keyword>
<keyword id="KW-0326">Glycosidase</keyword>
<keyword id="KW-0378">Hydrolase</keyword>
<keyword id="KW-0624">Polysaccharide degradation</keyword>
<keyword id="KW-0964">Secreted</keyword>
<keyword id="KW-0732">Signal</keyword>
<keyword id="KW-0858">Xylan degradation</keyword>
<gene>
    <name type="primary">abfB</name>
    <name type="ORF">AFLA_104300</name>
</gene>
<dbReference type="EC" id="3.2.1.55"/>
<dbReference type="EMBL" id="EQ963475">
    <property type="protein sequence ID" value="EED53056.1"/>
    <property type="molecule type" value="Genomic_DNA"/>
</dbReference>
<dbReference type="RefSeq" id="XP_002376302.1">
    <property type="nucleotide sequence ID" value="XM_002376261.1"/>
</dbReference>
<dbReference type="SMR" id="B8N7I7"/>
<dbReference type="STRING" id="332952.B8N7I7"/>
<dbReference type="GlyCosmos" id="B8N7I7">
    <property type="glycosylation" value="1 site, No reported glycans"/>
</dbReference>
<dbReference type="EnsemblFungi" id="EED53056">
    <property type="protein sequence ID" value="EED53056"/>
    <property type="gene ID" value="AFLA_104300"/>
</dbReference>
<dbReference type="VEuPathDB" id="FungiDB:AFLA_006351"/>
<dbReference type="eggNOG" id="ENOG502QS3Q">
    <property type="taxonomic scope" value="Eukaryota"/>
</dbReference>
<dbReference type="HOGENOM" id="CLU_029332_3_0_1"/>
<dbReference type="OMA" id="WNYPTRY"/>
<dbReference type="UniPathway" id="UPA00667"/>
<dbReference type="GO" id="GO:0005576">
    <property type="term" value="C:extracellular region"/>
    <property type="evidence" value="ECO:0000250"/>
    <property type="project" value="UniProtKB"/>
</dbReference>
<dbReference type="GO" id="GO:0046556">
    <property type="term" value="F:alpha-L-arabinofuranosidase activity"/>
    <property type="evidence" value="ECO:0000250"/>
    <property type="project" value="UniProtKB"/>
</dbReference>
<dbReference type="GO" id="GO:0031222">
    <property type="term" value="P:arabinan catabolic process"/>
    <property type="evidence" value="ECO:0007669"/>
    <property type="project" value="UniProtKB-UniPathway"/>
</dbReference>
<dbReference type="GO" id="GO:0019566">
    <property type="term" value="P:arabinose metabolic process"/>
    <property type="evidence" value="ECO:0000250"/>
    <property type="project" value="UniProtKB"/>
</dbReference>
<dbReference type="GO" id="GO:0046373">
    <property type="term" value="P:L-arabinose metabolic process"/>
    <property type="evidence" value="ECO:0007669"/>
    <property type="project" value="InterPro"/>
</dbReference>
<dbReference type="GO" id="GO:0045490">
    <property type="term" value="P:pectin catabolic process"/>
    <property type="evidence" value="ECO:0007669"/>
    <property type="project" value="TreeGrafter"/>
</dbReference>
<dbReference type="GO" id="GO:0045493">
    <property type="term" value="P:xylan catabolic process"/>
    <property type="evidence" value="ECO:0007669"/>
    <property type="project" value="UniProtKB-KW"/>
</dbReference>
<dbReference type="CDD" id="cd23399">
    <property type="entry name" value="beta-trefoil_ABD_ABFB"/>
    <property type="match status" value="1"/>
</dbReference>
<dbReference type="FunFam" id="2.60.120.200:FF:000131">
    <property type="entry name" value="Probable alpha-L-arabinofuranosidase B"/>
    <property type="match status" value="1"/>
</dbReference>
<dbReference type="FunFam" id="2.80.10.50:FF:000059">
    <property type="entry name" value="Probable alpha-L-arabinofuranosidase B"/>
    <property type="match status" value="1"/>
</dbReference>
<dbReference type="Gene3D" id="2.60.120.200">
    <property type="match status" value="1"/>
</dbReference>
<dbReference type="Gene3D" id="2.80.10.50">
    <property type="match status" value="1"/>
</dbReference>
<dbReference type="InterPro" id="IPR015289">
    <property type="entry name" value="A-L-arabinofuranosidase_B_cat"/>
</dbReference>
<dbReference type="InterPro" id="IPR038964">
    <property type="entry name" value="ABFB"/>
</dbReference>
<dbReference type="InterPro" id="IPR007934">
    <property type="entry name" value="AbfB_ABD"/>
</dbReference>
<dbReference type="InterPro" id="IPR036195">
    <property type="entry name" value="AbfB_ABD_sf"/>
</dbReference>
<dbReference type="InterPro" id="IPR013320">
    <property type="entry name" value="ConA-like_dom_sf"/>
</dbReference>
<dbReference type="PANTHER" id="PTHR39447">
    <property type="entry name" value="ALPHA-L-ARABINOFURANOSIDASE B"/>
    <property type="match status" value="1"/>
</dbReference>
<dbReference type="PANTHER" id="PTHR39447:SF2">
    <property type="entry name" value="ALPHA-L-ARABINOFURANOSIDASE B"/>
    <property type="match status" value="1"/>
</dbReference>
<dbReference type="Pfam" id="PF05270">
    <property type="entry name" value="AbfB"/>
    <property type="match status" value="1"/>
</dbReference>
<dbReference type="Pfam" id="PF09206">
    <property type="entry name" value="ArabFuran-catal"/>
    <property type="match status" value="1"/>
</dbReference>
<dbReference type="SUPFAM" id="SSF110221">
    <property type="entry name" value="AbfB domain"/>
    <property type="match status" value="1"/>
</dbReference>
<dbReference type="SUPFAM" id="SSF49899">
    <property type="entry name" value="Concanavalin A-like lectins/glucanases"/>
    <property type="match status" value="1"/>
</dbReference>
<sequence length="506" mass="52217">MSSGLSLERACAVALGIVASASLVAAGPCDIYSSGGTPCVAAHSTTRALYSAYTGALYQVKRGSDGSTTDIAPLSAGGVADAATQDSFCANTTCLITIIYDQSGRGNHLTQAPPGGFNGPESNGYDNLASAVGAPVTLNGKKAYGVFMSPGTGYRNNAASGTATGDEAEGMYAVLDGTHYNSACCFDYGNAEVSNTDTGNGHMEAIYYGDNTVWGSGAGSGPWIMADLENGLFSGLSSKNNAGDPSISYRFVTAVVKGEANQWSIRGANAASGSLSTYYSGARPSASGYNPMSKEGAIILGIGGDNSNGAQGTFYEGVMTSGYPSDATENSVQADIVAAKYAIASLTSGPALTVGSSISLQVTTAGYTTRYLAHDGSTVNTQVVSSSSTTALKQQASWTVRTGLANSACFSFESVDTPGSYIRHYNFALLLNANDGTKQFYEDATFCPQAGLNGQGNSIRSWSYPTRYFRHYENVLYVASNGGVQTFDATTSFNDDVSWVVSTGFA</sequence>
<comment type="function">
    <text evidence="1">Alpha-L-arabinofuranosidase involved in the degradation of arabinoxylan, a major component of plant hemicellulose. Able to hydrolyze 1,5-, 1,3- and 1,2-alpha-linkages not only in L-arabinofuranosyl oligosaccharides, but also in polysaccharides containing terminal non-reducing L-arabinofuranoses in side chains, like L-arabinan, arabinogalactan and arabinoxylan (By similarity).</text>
</comment>
<comment type="catalytic activity">
    <reaction>
        <text>Hydrolysis of terminal non-reducing alpha-L-arabinofuranoside residues in alpha-L-arabinosides.</text>
        <dbReference type="EC" id="3.2.1.55"/>
    </reaction>
</comment>
<comment type="pathway">
    <text>Glycan metabolism; L-arabinan degradation.</text>
</comment>
<comment type="subcellular location">
    <subcellularLocation>
        <location evidence="1">Secreted</location>
    </subcellularLocation>
</comment>
<comment type="domain">
    <text evidence="1">Organized into two domains: an N-terminal catalytic domain and a C-terminal arabinose-binding domain (ABD).</text>
</comment>
<comment type="similarity">
    <text evidence="4">Belongs to the glycosyl hydrolase 54 family.</text>
</comment>
<accession>B8N7I7</accession>
<protein>
    <recommendedName>
        <fullName>Probable alpha-L-arabinofuranosidase B</fullName>
        <shortName>ABF B</shortName>
        <shortName>Arabinosidase B</shortName>
        <ecNumber>3.2.1.55</ecNumber>
    </recommendedName>
</protein>
<reference key="1">
    <citation type="journal article" date="2015" name="Genome Announc.">
        <title>Genome sequence of Aspergillus flavus NRRL 3357, a strain that causes aflatoxin contamination of food and feed.</title>
        <authorList>
            <person name="Nierman W.C."/>
            <person name="Yu J."/>
            <person name="Fedorova-Abrams N.D."/>
            <person name="Losada L."/>
            <person name="Cleveland T.E."/>
            <person name="Bhatnagar D."/>
            <person name="Bennett J.W."/>
            <person name="Dean R."/>
            <person name="Payne G.A."/>
        </authorList>
    </citation>
    <scope>NUCLEOTIDE SEQUENCE [LARGE SCALE GENOMIC DNA]</scope>
    <source>
        <strain>ATCC 200026 / FGSC A1120 / IAM 13836 / NRRL 3357 / JCM 12722 / SRRC 167</strain>
    </source>
</reference>